<gene>
    <name evidence="1" type="primary">xpt</name>
    <name type="ordered locus">CTC_02386</name>
</gene>
<organism>
    <name type="scientific">Clostridium tetani (strain Massachusetts / E88)</name>
    <dbReference type="NCBI Taxonomy" id="212717"/>
    <lineage>
        <taxon>Bacteria</taxon>
        <taxon>Bacillati</taxon>
        <taxon>Bacillota</taxon>
        <taxon>Clostridia</taxon>
        <taxon>Eubacteriales</taxon>
        <taxon>Clostridiaceae</taxon>
        <taxon>Clostridium</taxon>
    </lineage>
</organism>
<feature type="chain" id="PRO_0000339694" description="Xanthine phosphoribosyltransferase">
    <location>
        <begin position="1"/>
        <end position="190"/>
    </location>
</feature>
<feature type="binding site" evidence="1">
    <location>
        <position position="20"/>
    </location>
    <ligand>
        <name>xanthine</name>
        <dbReference type="ChEBI" id="CHEBI:17712"/>
    </ligand>
</feature>
<feature type="binding site" evidence="1">
    <location>
        <position position="27"/>
    </location>
    <ligand>
        <name>xanthine</name>
        <dbReference type="ChEBI" id="CHEBI:17712"/>
    </ligand>
</feature>
<feature type="binding site" evidence="1">
    <location>
        <begin position="129"/>
        <end position="133"/>
    </location>
    <ligand>
        <name>5-phospho-alpha-D-ribose 1-diphosphate</name>
        <dbReference type="ChEBI" id="CHEBI:58017"/>
    </ligand>
</feature>
<feature type="binding site" evidence="1">
    <location>
        <position position="157"/>
    </location>
    <ligand>
        <name>xanthine</name>
        <dbReference type="ChEBI" id="CHEBI:17712"/>
    </ligand>
</feature>
<protein>
    <recommendedName>
        <fullName evidence="1">Xanthine phosphoribosyltransferase</fullName>
        <shortName evidence="1">XPRTase</shortName>
        <ecNumber evidence="1">2.4.2.22</ecNumber>
    </recommendedName>
</protein>
<evidence type="ECO:0000255" key="1">
    <source>
        <dbReference type="HAMAP-Rule" id="MF_01184"/>
    </source>
</evidence>
<evidence type="ECO:0000305" key="2"/>
<sequence>MNILKDKINKEGIVIDNRILRVDMFLNHQLDIELLNEIGKEFKNRFKDKEINKILTVETSGIGIACVVAQYFNNVPVVFAKKHAGSNMGENVYESKVYSFTKDIEYTIKVSKDYIDKEDNILIIDDFLASGSAMSGLIDIAEKSGAIVEGVGIVIEKEFQKGRKIILNKGIQLESLAIIKGFEDNKVVFK</sequence>
<dbReference type="EC" id="2.4.2.22" evidence="1"/>
<dbReference type="EMBL" id="AE015927">
    <property type="protein sequence ID" value="AAO36859.1"/>
    <property type="status" value="ALT_INIT"/>
    <property type="molecule type" value="Genomic_DNA"/>
</dbReference>
<dbReference type="RefSeq" id="WP_035108871.1">
    <property type="nucleotide sequence ID" value="NC_004557.1"/>
</dbReference>
<dbReference type="SMR" id="Q891I6"/>
<dbReference type="STRING" id="212717.CTC_02386"/>
<dbReference type="GeneID" id="24253488"/>
<dbReference type="KEGG" id="ctc:CTC_02386"/>
<dbReference type="HOGENOM" id="CLU_099015_0_0_9"/>
<dbReference type="OrthoDB" id="9790678at2"/>
<dbReference type="UniPathway" id="UPA00602">
    <property type="reaction ID" value="UER00658"/>
</dbReference>
<dbReference type="Proteomes" id="UP000001412">
    <property type="component" value="Chromosome"/>
</dbReference>
<dbReference type="GO" id="GO:0005737">
    <property type="term" value="C:cytoplasm"/>
    <property type="evidence" value="ECO:0007669"/>
    <property type="project" value="UniProtKB-SubCell"/>
</dbReference>
<dbReference type="GO" id="GO:0000310">
    <property type="term" value="F:xanthine phosphoribosyltransferase activity"/>
    <property type="evidence" value="ECO:0007669"/>
    <property type="project" value="UniProtKB-UniRule"/>
</dbReference>
<dbReference type="GO" id="GO:0006166">
    <property type="term" value="P:purine ribonucleoside salvage"/>
    <property type="evidence" value="ECO:0007669"/>
    <property type="project" value="UniProtKB-KW"/>
</dbReference>
<dbReference type="GO" id="GO:0046110">
    <property type="term" value="P:xanthine metabolic process"/>
    <property type="evidence" value="ECO:0007669"/>
    <property type="project" value="InterPro"/>
</dbReference>
<dbReference type="GO" id="GO:0032265">
    <property type="term" value="P:XMP salvage"/>
    <property type="evidence" value="ECO:0007669"/>
    <property type="project" value="UniProtKB-UniRule"/>
</dbReference>
<dbReference type="CDD" id="cd06223">
    <property type="entry name" value="PRTases_typeI"/>
    <property type="match status" value="1"/>
</dbReference>
<dbReference type="Gene3D" id="3.40.50.2020">
    <property type="match status" value="1"/>
</dbReference>
<dbReference type="HAMAP" id="MF_01184">
    <property type="entry name" value="XPRTase"/>
    <property type="match status" value="1"/>
</dbReference>
<dbReference type="InterPro" id="IPR000836">
    <property type="entry name" value="PRibTrfase_dom"/>
</dbReference>
<dbReference type="InterPro" id="IPR029057">
    <property type="entry name" value="PRTase-like"/>
</dbReference>
<dbReference type="InterPro" id="IPR050118">
    <property type="entry name" value="Pur/Pyrimidine_PRTase"/>
</dbReference>
<dbReference type="InterPro" id="IPR010079">
    <property type="entry name" value="Xanthine_PRibTrfase"/>
</dbReference>
<dbReference type="NCBIfam" id="NF006671">
    <property type="entry name" value="PRK09219.1"/>
    <property type="match status" value="1"/>
</dbReference>
<dbReference type="NCBIfam" id="TIGR01744">
    <property type="entry name" value="XPRTase"/>
    <property type="match status" value="1"/>
</dbReference>
<dbReference type="PANTHER" id="PTHR43864">
    <property type="entry name" value="HYPOXANTHINE/GUANINE PHOSPHORIBOSYLTRANSFERASE"/>
    <property type="match status" value="1"/>
</dbReference>
<dbReference type="PANTHER" id="PTHR43864:SF1">
    <property type="entry name" value="XANTHINE PHOSPHORIBOSYLTRANSFERASE"/>
    <property type="match status" value="1"/>
</dbReference>
<dbReference type="Pfam" id="PF00156">
    <property type="entry name" value="Pribosyltran"/>
    <property type="match status" value="1"/>
</dbReference>
<dbReference type="SUPFAM" id="SSF53271">
    <property type="entry name" value="PRTase-like"/>
    <property type="match status" value="1"/>
</dbReference>
<name>XPT_CLOTE</name>
<comment type="function">
    <text evidence="1">Converts the preformed base xanthine, a product of nucleic acid breakdown, to xanthosine 5'-monophosphate (XMP), so it can be reused for RNA or DNA synthesis.</text>
</comment>
<comment type="catalytic activity">
    <reaction evidence="1">
        <text>XMP + diphosphate = xanthine + 5-phospho-alpha-D-ribose 1-diphosphate</text>
        <dbReference type="Rhea" id="RHEA:10800"/>
        <dbReference type="ChEBI" id="CHEBI:17712"/>
        <dbReference type="ChEBI" id="CHEBI:33019"/>
        <dbReference type="ChEBI" id="CHEBI:57464"/>
        <dbReference type="ChEBI" id="CHEBI:58017"/>
        <dbReference type="EC" id="2.4.2.22"/>
    </reaction>
</comment>
<comment type="pathway">
    <text evidence="1">Purine metabolism; XMP biosynthesis via salvage pathway; XMP from xanthine: step 1/1.</text>
</comment>
<comment type="subunit">
    <text evidence="1">Homodimer.</text>
</comment>
<comment type="subcellular location">
    <subcellularLocation>
        <location evidence="1">Cytoplasm</location>
    </subcellularLocation>
</comment>
<comment type="similarity">
    <text evidence="1">Belongs to the purine/pyrimidine phosphoribosyltransferase family. Xpt subfamily.</text>
</comment>
<comment type="sequence caution" evidence="2">
    <conflict type="erroneous initiation">
        <sequence resource="EMBL-CDS" id="AAO36859"/>
    </conflict>
</comment>
<keyword id="KW-0963">Cytoplasm</keyword>
<keyword id="KW-0328">Glycosyltransferase</keyword>
<keyword id="KW-0660">Purine salvage</keyword>
<keyword id="KW-1185">Reference proteome</keyword>
<keyword id="KW-0808">Transferase</keyword>
<accession>Q891I6</accession>
<reference key="1">
    <citation type="journal article" date="2003" name="Proc. Natl. Acad. Sci. U.S.A.">
        <title>The genome sequence of Clostridium tetani, the causative agent of tetanus disease.</title>
        <authorList>
            <person name="Brueggemann H."/>
            <person name="Baeumer S."/>
            <person name="Fricke W.F."/>
            <person name="Wiezer A."/>
            <person name="Liesegang H."/>
            <person name="Decker I."/>
            <person name="Herzberg C."/>
            <person name="Martinez-Arias R."/>
            <person name="Merkl R."/>
            <person name="Henne A."/>
            <person name="Gottschalk G."/>
        </authorList>
    </citation>
    <scope>NUCLEOTIDE SEQUENCE [LARGE SCALE GENOMIC DNA]</scope>
    <source>
        <strain>Massachusetts / E88</strain>
    </source>
</reference>
<proteinExistence type="inferred from homology"/>